<organism>
    <name type="scientific">Marinobacter nauticus (strain ATCC 700491 / DSM 11845 / VT8)</name>
    <name type="common">Marinobacter aquaeolei</name>
    <dbReference type="NCBI Taxonomy" id="351348"/>
    <lineage>
        <taxon>Bacteria</taxon>
        <taxon>Pseudomonadati</taxon>
        <taxon>Pseudomonadota</taxon>
        <taxon>Gammaproteobacteria</taxon>
        <taxon>Pseudomonadales</taxon>
        <taxon>Marinobacteraceae</taxon>
        <taxon>Marinobacter</taxon>
    </lineage>
</organism>
<sequence>MSTILVLHGPNLNMLGTREPEVYGHETLADIDDRLRSKAAEKGHHLLHLQSNAEYELIERVHEARAEGVDFIIINPAAFTHTSVALRDAMLASGIPFIEVHLSNVHAREPFRHHSYFSDIAEGVICGLGSQGYDLALKAALQRIHR</sequence>
<comment type="function">
    <text evidence="1">Catalyzes a trans-dehydration via an enolate intermediate.</text>
</comment>
<comment type="catalytic activity">
    <reaction evidence="1">
        <text>3-dehydroquinate = 3-dehydroshikimate + H2O</text>
        <dbReference type="Rhea" id="RHEA:21096"/>
        <dbReference type="ChEBI" id="CHEBI:15377"/>
        <dbReference type="ChEBI" id="CHEBI:16630"/>
        <dbReference type="ChEBI" id="CHEBI:32364"/>
        <dbReference type="EC" id="4.2.1.10"/>
    </reaction>
</comment>
<comment type="pathway">
    <text evidence="1">Metabolic intermediate biosynthesis; chorismate biosynthesis; chorismate from D-erythrose 4-phosphate and phosphoenolpyruvate: step 3/7.</text>
</comment>
<comment type="subunit">
    <text evidence="1">Homododecamer.</text>
</comment>
<comment type="similarity">
    <text evidence="1">Belongs to the type-II 3-dehydroquinase family.</text>
</comment>
<gene>
    <name evidence="1" type="primary">aroQ</name>
    <name type="ordered locus">Maqu_3443</name>
</gene>
<protein>
    <recommendedName>
        <fullName evidence="1">3-dehydroquinate dehydratase</fullName>
        <shortName evidence="1">3-dehydroquinase</shortName>
        <ecNumber evidence="1">4.2.1.10</ecNumber>
    </recommendedName>
    <alternativeName>
        <fullName evidence="1">Type II DHQase</fullName>
    </alternativeName>
</protein>
<reference key="1">
    <citation type="journal article" date="2011" name="Appl. Environ. Microbiol.">
        <title>Genomic potential of Marinobacter aquaeolei, a biogeochemical 'opportunitroph'.</title>
        <authorList>
            <person name="Singer E."/>
            <person name="Webb E.A."/>
            <person name="Nelson W.C."/>
            <person name="Heidelberg J.F."/>
            <person name="Ivanova N."/>
            <person name="Pati A."/>
            <person name="Edwards K.J."/>
        </authorList>
    </citation>
    <scope>NUCLEOTIDE SEQUENCE [LARGE SCALE GENOMIC DNA]</scope>
    <source>
        <strain>ATCC 700491 / DSM 11845 / VT8</strain>
    </source>
</reference>
<keyword id="KW-0028">Amino-acid biosynthesis</keyword>
<keyword id="KW-0057">Aromatic amino acid biosynthesis</keyword>
<keyword id="KW-0456">Lyase</keyword>
<name>AROQ_MARN8</name>
<proteinExistence type="inferred from homology"/>
<evidence type="ECO:0000255" key="1">
    <source>
        <dbReference type="HAMAP-Rule" id="MF_00169"/>
    </source>
</evidence>
<accession>A1U695</accession>
<feature type="chain" id="PRO_1000023481" description="3-dehydroquinate dehydratase">
    <location>
        <begin position="1"/>
        <end position="146"/>
    </location>
</feature>
<feature type="active site" description="Proton acceptor" evidence="1">
    <location>
        <position position="23"/>
    </location>
</feature>
<feature type="active site" description="Proton donor" evidence="1">
    <location>
        <position position="101"/>
    </location>
</feature>
<feature type="binding site" evidence="1">
    <location>
        <position position="75"/>
    </location>
    <ligand>
        <name>substrate</name>
    </ligand>
</feature>
<feature type="binding site" evidence="1">
    <location>
        <position position="81"/>
    </location>
    <ligand>
        <name>substrate</name>
    </ligand>
</feature>
<feature type="binding site" evidence="1">
    <location>
        <position position="88"/>
    </location>
    <ligand>
        <name>substrate</name>
    </ligand>
</feature>
<feature type="binding site" evidence="1">
    <location>
        <begin position="102"/>
        <end position="103"/>
    </location>
    <ligand>
        <name>substrate</name>
    </ligand>
</feature>
<feature type="binding site" evidence="1">
    <location>
        <position position="112"/>
    </location>
    <ligand>
        <name>substrate</name>
    </ligand>
</feature>
<feature type="site" description="Transition state stabilizer" evidence="1">
    <location>
        <position position="18"/>
    </location>
</feature>
<dbReference type="EC" id="4.2.1.10" evidence="1"/>
<dbReference type="EMBL" id="CP000514">
    <property type="protein sequence ID" value="ABM20514.1"/>
    <property type="molecule type" value="Genomic_DNA"/>
</dbReference>
<dbReference type="RefSeq" id="WP_011786855.1">
    <property type="nucleotide sequence ID" value="NC_008740.1"/>
</dbReference>
<dbReference type="SMR" id="A1U695"/>
<dbReference type="STRING" id="351348.Maqu_3443"/>
<dbReference type="GeneID" id="31822678"/>
<dbReference type="KEGG" id="maq:Maqu_3443"/>
<dbReference type="eggNOG" id="COG0757">
    <property type="taxonomic scope" value="Bacteria"/>
</dbReference>
<dbReference type="HOGENOM" id="CLU_090968_1_0_6"/>
<dbReference type="OrthoDB" id="9790793at2"/>
<dbReference type="UniPathway" id="UPA00053">
    <property type="reaction ID" value="UER00086"/>
</dbReference>
<dbReference type="Proteomes" id="UP000000998">
    <property type="component" value="Chromosome"/>
</dbReference>
<dbReference type="GO" id="GO:0003855">
    <property type="term" value="F:3-dehydroquinate dehydratase activity"/>
    <property type="evidence" value="ECO:0007669"/>
    <property type="project" value="UniProtKB-UniRule"/>
</dbReference>
<dbReference type="GO" id="GO:0008652">
    <property type="term" value="P:amino acid biosynthetic process"/>
    <property type="evidence" value="ECO:0007669"/>
    <property type="project" value="UniProtKB-KW"/>
</dbReference>
<dbReference type="GO" id="GO:0009073">
    <property type="term" value="P:aromatic amino acid family biosynthetic process"/>
    <property type="evidence" value="ECO:0007669"/>
    <property type="project" value="UniProtKB-KW"/>
</dbReference>
<dbReference type="GO" id="GO:0009423">
    <property type="term" value="P:chorismate biosynthetic process"/>
    <property type="evidence" value="ECO:0007669"/>
    <property type="project" value="UniProtKB-UniRule"/>
</dbReference>
<dbReference type="GO" id="GO:0019631">
    <property type="term" value="P:quinate catabolic process"/>
    <property type="evidence" value="ECO:0007669"/>
    <property type="project" value="TreeGrafter"/>
</dbReference>
<dbReference type="CDD" id="cd00466">
    <property type="entry name" value="DHQase_II"/>
    <property type="match status" value="1"/>
</dbReference>
<dbReference type="Gene3D" id="3.40.50.9100">
    <property type="entry name" value="Dehydroquinase, class II"/>
    <property type="match status" value="1"/>
</dbReference>
<dbReference type="HAMAP" id="MF_00169">
    <property type="entry name" value="AroQ"/>
    <property type="match status" value="1"/>
</dbReference>
<dbReference type="InterPro" id="IPR001874">
    <property type="entry name" value="DHquinase_II"/>
</dbReference>
<dbReference type="InterPro" id="IPR018509">
    <property type="entry name" value="DHquinase_II_CS"/>
</dbReference>
<dbReference type="InterPro" id="IPR036441">
    <property type="entry name" value="DHquinase_II_sf"/>
</dbReference>
<dbReference type="NCBIfam" id="TIGR01088">
    <property type="entry name" value="aroQ"/>
    <property type="match status" value="1"/>
</dbReference>
<dbReference type="NCBIfam" id="NF003804">
    <property type="entry name" value="PRK05395.1-1"/>
    <property type="match status" value="1"/>
</dbReference>
<dbReference type="NCBIfam" id="NF003805">
    <property type="entry name" value="PRK05395.1-2"/>
    <property type="match status" value="1"/>
</dbReference>
<dbReference type="NCBIfam" id="NF003806">
    <property type="entry name" value="PRK05395.1-3"/>
    <property type="match status" value="1"/>
</dbReference>
<dbReference type="NCBIfam" id="NF003807">
    <property type="entry name" value="PRK05395.1-4"/>
    <property type="match status" value="1"/>
</dbReference>
<dbReference type="PANTHER" id="PTHR21272">
    <property type="entry name" value="CATABOLIC 3-DEHYDROQUINASE"/>
    <property type="match status" value="1"/>
</dbReference>
<dbReference type="PANTHER" id="PTHR21272:SF3">
    <property type="entry name" value="CATABOLIC 3-DEHYDROQUINASE"/>
    <property type="match status" value="1"/>
</dbReference>
<dbReference type="Pfam" id="PF01220">
    <property type="entry name" value="DHquinase_II"/>
    <property type="match status" value="1"/>
</dbReference>
<dbReference type="PIRSF" id="PIRSF001399">
    <property type="entry name" value="DHquinase_II"/>
    <property type="match status" value="1"/>
</dbReference>
<dbReference type="SUPFAM" id="SSF52304">
    <property type="entry name" value="Type II 3-dehydroquinate dehydratase"/>
    <property type="match status" value="1"/>
</dbReference>
<dbReference type="PROSITE" id="PS01029">
    <property type="entry name" value="DEHYDROQUINASE_II"/>
    <property type="match status" value="1"/>
</dbReference>